<organism>
    <name type="scientific">Homo sapiens</name>
    <name type="common">Human</name>
    <dbReference type="NCBI Taxonomy" id="9606"/>
    <lineage>
        <taxon>Eukaryota</taxon>
        <taxon>Metazoa</taxon>
        <taxon>Chordata</taxon>
        <taxon>Craniata</taxon>
        <taxon>Vertebrata</taxon>
        <taxon>Euteleostomi</taxon>
        <taxon>Mammalia</taxon>
        <taxon>Eutheria</taxon>
        <taxon>Euarchontoglires</taxon>
        <taxon>Primates</taxon>
        <taxon>Haplorrhini</taxon>
        <taxon>Catarrhini</taxon>
        <taxon>Hominidae</taxon>
        <taxon>Homo</taxon>
    </lineage>
</organism>
<accession>Q8IXL7</accession>
<accession>B4DR19</accession>
<accession>B7ZAQ0</accession>
<accession>Q6UXS2</accession>
<name>MSRB3_HUMAN</name>
<dbReference type="EC" id="1.8.4.12" evidence="3"/>
<dbReference type="EC" id="1.8.4.14" evidence="3"/>
<dbReference type="EMBL" id="AY358229">
    <property type="protein sequence ID" value="AAQ88596.1"/>
    <property type="molecule type" value="mRNA"/>
</dbReference>
<dbReference type="EMBL" id="AK293084">
    <property type="protein sequence ID" value="BAF85773.1"/>
    <property type="molecule type" value="mRNA"/>
</dbReference>
<dbReference type="EMBL" id="AK299065">
    <property type="protein sequence ID" value="BAG61131.1"/>
    <property type="molecule type" value="mRNA"/>
</dbReference>
<dbReference type="EMBL" id="AK316365">
    <property type="protein sequence ID" value="BAH14736.1"/>
    <property type="molecule type" value="mRNA"/>
</dbReference>
<dbReference type="EMBL" id="BX648776">
    <property type="protein sequence ID" value="CAI46018.1"/>
    <property type="molecule type" value="mRNA"/>
</dbReference>
<dbReference type="EMBL" id="BC040053">
    <property type="protein sequence ID" value="AAH40053.1"/>
    <property type="molecule type" value="mRNA"/>
</dbReference>
<dbReference type="CCDS" id="CCDS31853.1">
    <molecule id="Q8IXL7-2"/>
</dbReference>
<dbReference type="CCDS" id="CCDS8973.1">
    <molecule id="Q8IXL7-1"/>
</dbReference>
<dbReference type="RefSeq" id="NP_001026849.1">
    <molecule id="Q8IXL7-2"/>
    <property type="nucleotide sequence ID" value="NM_001031679.3"/>
</dbReference>
<dbReference type="RefSeq" id="NP_001180389.1">
    <molecule id="Q8IXL7-2"/>
    <property type="nucleotide sequence ID" value="NM_001193460.2"/>
</dbReference>
<dbReference type="RefSeq" id="NP_001180390.1">
    <molecule id="Q8IXL7-2"/>
    <property type="nucleotide sequence ID" value="NM_001193461.2"/>
</dbReference>
<dbReference type="RefSeq" id="NP_932346.1">
    <molecule id="Q8IXL7-1"/>
    <property type="nucleotide sequence ID" value="NM_198080.4"/>
</dbReference>
<dbReference type="RefSeq" id="XP_024304686.1">
    <molecule id="Q8IXL7-2"/>
    <property type="nucleotide sequence ID" value="XM_024448918.2"/>
</dbReference>
<dbReference type="RefSeq" id="XP_024304687.1">
    <molecule id="Q8IXL7-2"/>
    <property type="nucleotide sequence ID" value="XM_024448919.2"/>
</dbReference>
<dbReference type="RefSeq" id="XP_024304688.1">
    <molecule id="Q8IXL7-2"/>
    <property type="nucleotide sequence ID" value="XM_024448920.1"/>
</dbReference>
<dbReference type="RefSeq" id="XP_024304689.1">
    <molecule id="Q8IXL7-2"/>
    <property type="nucleotide sequence ID" value="XM_024448921.2"/>
</dbReference>
<dbReference type="RefSeq" id="XP_054227626.1">
    <molecule id="Q8IXL7-2"/>
    <property type="nucleotide sequence ID" value="XM_054371651.1"/>
</dbReference>
<dbReference type="RefSeq" id="XP_054227627.1">
    <molecule id="Q8IXL7-2"/>
    <property type="nucleotide sequence ID" value="XM_054371652.1"/>
</dbReference>
<dbReference type="RefSeq" id="XP_054227628.1">
    <molecule id="Q8IXL7-2"/>
    <property type="nucleotide sequence ID" value="XM_054371653.1"/>
</dbReference>
<dbReference type="RefSeq" id="XP_054227629.1">
    <molecule id="Q8IXL7-2"/>
    <property type="nucleotide sequence ID" value="XM_054371654.1"/>
</dbReference>
<dbReference type="PDB" id="6QA0">
    <property type="method" value="X-ray"/>
    <property type="resolution" value="1.71 A"/>
    <property type="chains" value="A/B=31-169"/>
</dbReference>
<dbReference type="PDBsum" id="6QA0"/>
<dbReference type="SMR" id="Q8IXL7"/>
<dbReference type="BioGRID" id="128990">
    <property type="interactions" value="90"/>
</dbReference>
<dbReference type="FunCoup" id="Q8IXL7">
    <property type="interactions" value="1835"/>
</dbReference>
<dbReference type="IntAct" id="Q8IXL7">
    <property type="interactions" value="48"/>
</dbReference>
<dbReference type="MINT" id="Q8IXL7"/>
<dbReference type="STRING" id="9606.ENSP00000347324"/>
<dbReference type="ChEMBL" id="CHEMBL3509604"/>
<dbReference type="GlyGen" id="Q8IXL7">
    <property type="glycosylation" value="1 site, 1 O-linked glycan (1 site)"/>
</dbReference>
<dbReference type="iPTMnet" id="Q8IXL7"/>
<dbReference type="PhosphoSitePlus" id="Q8IXL7"/>
<dbReference type="BioMuta" id="MSRB3"/>
<dbReference type="DMDM" id="327478523"/>
<dbReference type="jPOST" id="Q8IXL7"/>
<dbReference type="MassIVE" id="Q8IXL7"/>
<dbReference type="PaxDb" id="9606-ENSP00000347324"/>
<dbReference type="PeptideAtlas" id="Q8IXL7"/>
<dbReference type="ProteomicsDB" id="71024">
    <molecule id="Q8IXL7-1"/>
</dbReference>
<dbReference type="ProteomicsDB" id="71025">
    <molecule id="Q8IXL7-2"/>
</dbReference>
<dbReference type="Pumba" id="Q8IXL7"/>
<dbReference type="Antibodypedia" id="2870">
    <property type="antibodies" value="127 antibodies from 23 providers"/>
</dbReference>
<dbReference type="DNASU" id="253827"/>
<dbReference type="Ensembl" id="ENST00000308259.10">
    <molecule id="Q8IXL7-2"/>
    <property type="protein sequence ID" value="ENSP00000312274.6"/>
    <property type="gene ID" value="ENSG00000174099.12"/>
</dbReference>
<dbReference type="Ensembl" id="ENST00000355192.8">
    <molecule id="Q8IXL7-1"/>
    <property type="protein sequence ID" value="ENSP00000347324.3"/>
    <property type="gene ID" value="ENSG00000174099.12"/>
</dbReference>
<dbReference type="Ensembl" id="ENST00000535664.5">
    <molecule id="Q8IXL7-2"/>
    <property type="protein sequence ID" value="ENSP00000441650.1"/>
    <property type="gene ID" value="ENSG00000174099.12"/>
</dbReference>
<dbReference type="Ensembl" id="ENST00000614640.4">
    <molecule id="Q8IXL7-2"/>
    <property type="protein sequence ID" value="ENSP00000481483.1"/>
    <property type="gene ID" value="ENSG00000174099.12"/>
</dbReference>
<dbReference type="Ensembl" id="ENST00000642404.1">
    <molecule id="Q8IXL7-2"/>
    <property type="protein sequence ID" value="ENSP00000496008.1"/>
    <property type="gene ID" value="ENSG00000174099.12"/>
</dbReference>
<dbReference type="Ensembl" id="ENST00000642411.1">
    <molecule id="Q8IXL7-2"/>
    <property type="protein sequence ID" value="ENSP00000494265.1"/>
    <property type="gene ID" value="ENSG00000174099.12"/>
</dbReference>
<dbReference type="Ensembl" id="ENST00000646299.1">
    <molecule id="Q8IXL7-2"/>
    <property type="protein sequence ID" value="ENSP00000494941.1"/>
    <property type="gene ID" value="ENSG00000174099.12"/>
</dbReference>
<dbReference type="GeneID" id="253827"/>
<dbReference type="KEGG" id="hsa:253827"/>
<dbReference type="MANE-Select" id="ENST00000308259.10">
    <molecule id="Q8IXL7-2"/>
    <property type="protein sequence ID" value="ENSP00000312274.6"/>
    <property type="RefSeq nucleotide sequence ID" value="NM_001031679.3"/>
    <property type="RefSeq protein sequence ID" value="NP_001026849.1"/>
</dbReference>
<dbReference type="UCSC" id="uc001ssm.3">
    <molecule id="Q8IXL7-1"/>
    <property type="organism name" value="human"/>
</dbReference>
<dbReference type="AGR" id="HGNC:27375"/>
<dbReference type="CTD" id="253827"/>
<dbReference type="DisGeNET" id="253827"/>
<dbReference type="GeneCards" id="MSRB3"/>
<dbReference type="HGNC" id="HGNC:27375">
    <property type="gene designation" value="MSRB3"/>
</dbReference>
<dbReference type="HPA" id="ENSG00000174099">
    <property type="expression patterns" value="Low tissue specificity"/>
</dbReference>
<dbReference type="MalaCards" id="MSRB3"/>
<dbReference type="MIM" id="613718">
    <property type="type" value="phenotype"/>
</dbReference>
<dbReference type="MIM" id="613719">
    <property type="type" value="gene"/>
</dbReference>
<dbReference type="neXtProt" id="NX_Q8IXL7"/>
<dbReference type="OpenTargets" id="ENSG00000174099"/>
<dbReference type="Orphanet" id="90636">
    <property type="disease" value="Rare autosomal recessive non-syndromic sensorineural deafness type DFNB"/>
</dbReference>
<dbReference type="PharmGKB" id="PA134991350"/>
<dbReference type="VEuPathDB" id="HostDB:ENSG00000174099"/>
<dbReference type="eggNOG" id="KOG0856">
    <property type="taxonomic scope" value="Eukaryota"/>
</dbReference>
<dbReference type="GeneTree" id="ENSGT00940000155240"/>
<dbReference type="InParanoid" id="Q8IXL7"/>
<dbReference type="OMA" id="DEQWRAE"/>
<dbReference type="OrthoDB" id="44061at2759"/>
<dbReference type="PAN-GO" id="Q8IXL7">
    <property type="GO annotations" value="2 GO annotations based on evolutionary models"/>
</dbReference>
<dbReference type="PhylomeDB" id="Q8IXL7"/>
<dbReference type="TreeFam" id="TF329147"/>
<dbReference type="BRENDA" id="1.8.4.12">
    <property type="organism ID" value="2681"/>
</dbReference>
<dbReference type="BRENDA" id="1.8.4.B3">
    <property type="organism ID" value="2681"/>
</dbReference>
<dbReference type="PathwayCommons" id="Q8IXL7"/>
<dbReference type="Reactome" id="R-HSA-5676934">
    <property type="pathway name" value="Protein repair"/>
</dbReference>
<dbReference type="SignaLink" id="Q8IXL7"/>
<dbReference type="BioGRID-ORCS" id="253827">
    <property type="hits" value="9 hits in 1151 CRISPR screens"/>
</dbReference>
<dbReference type="ChiTaRS" id="MSRB3">
    <property type="organism name" value="human"/>
</dbReference>
<dbReference type="GenomeRNAi" id="253827"/>
<dbReference type="Pharos" id="Q8IXL7">
    <property type="development level" value="Tbio"/>
</dbReference>
<dbReference type="PRO" id="PR:Q8IXL7"/>
<dbReference type="Proteomes" id="UP000005640">
    <property type="component" value="Chromosome 12"/>
</dbReference>
<dbReference type="RNAct" id="Q8IXL7">
    <property type="molecule type" value="protein"/>
</dbReference>
<dbReference type="Bgee" id="ENSG00000174099">
    <property type="expression patterns" value="Expressed in saphenous vein and 185 other cell types or tissues"/>
</dbReference>
<dbReference type="ExpressionAtlas" id="Q8IXL7">
    <property type="expression patterns" value="baseline and differential"/>
</dbReference>
<dbReference type="GO" id="GO:0005737">
    <property type="term" value="C:cytoplasm"/>
    <property type="evidence" value="ECO:0000318"/>
    <property type="project" value="GO_Central"/>
</dbReference>
<dbReference type="GO" id="GO:0005829">
    <property type="term" value="C:cytosol"/>
    <property type="evidence" value="ECO:0000304"/>
    <property type="project" value="Reactome"/>
</dbReference>
<dbReference type="GO" id="GO:0005783">
    <property type="term" value="C:endoplasmic reticulum"/>
    <property type="evidence" value="ECO:0000314"/>
    <property type="project" value="HGNC-UCL"/>
</dbReference>
<dbReference type="GO" id="GO:0005739">
    <property type="term" value="C:mitochondrion"/>
    <property type="evidence" value="ECO:0000314"/>
    <property type="project" value="HGNC-UCL"/>
</dbReference>
<dbReference type="GO" id="GO:0033745">
    <property type="term" value="F:L-methionine-(R)-S-oxide reductase activity"/>
    <property type="evidence" value="ECO:0007669"/>
    <property type="project" value="UniProtKB-EC"/>
</dbReference>
<dbReference type="GO" id="GO:0033743">
    <property type="term" value="F:peptide-methionine (R)-S-oxide reductase activity"/>
    <property type="evidence" value="ECO:0000314"/>
    <property type="project" value="HGNC-UCL"/>
</dbReference>
<dbReference type="GO" id="GO:0008270">
    <property type="term" value="F:zinc ion binding"/>
    <property type="evidence" value="ECO:0000314"/>
    <property type="project" value="HGNC-UCL"/>
</dbReference>
<dbReference type="GO" id="GO:0030091">
    <property type="term" value="P:protein repair"/>
    <property type="evidence" value="ECO:0000314"/>
    <property type="project" value="HGNC-UCL"/>
</dbReference>
<dbReference type="GO" id="GO:0006979">
    <property type="term" value="P:response to oxidative stress"/>
    <property type="evidence" value="ECO:0007669"/>
    <property type="project" value="InterPro"/>
</dbReference>
<dbReference type="FunFam" id="2.170.150.20:FF:000004">
    <property type="entry name" value="Peptide-methionine (R)-S-oxide reductase"/>
    <property type="match status" value="1"/>
</dbReference>
<dbReference type="Gene3D" id="2.170.150.20">
    <property type="entry name" value="Peptide methionine sulfoxide reductase"/>
    <property type="match status" value="1"/>
</dbReference>
<dbReference type="HAMAP" id="MF_01400">
    <property type="entry name" value="MsrB"/>
    <property type="match status" value="1"/>
</dbReference>
<dbReference type="InterPro" id="IPR028427">
    <property type="entry name" value="Met_Sox_Rdtase_MsrB"/>
</dbReference>
<dbReference type="InterPro" id="IPR002579">
    <property type="entry name" value="Met_Sox_Rdtase_MsrB_dom"/>
</dbReference>
<dbReference type="InterPro" id="IPR011057">
    <property type="entry name" value="Mss4-like_sf"/>
</dbReference>
<dbReference type="NCBIfam" id="TIGR00357">
    <property type="entry name" value="peptide-methionine (R)-S-oxide reductase MsrB"/>
    <property type="match status" value="1"/>
</dbReference>
<dbReference type="PANTHER" id="PTHR10173">
    <property type="entry name" value="METHIONINE SULFOXIDE REDUCTASE"/>
    <property type="match status" value="1"/>
</dbReference>
<dbReference type="PANTHER" id="PTHR10173:SF56">
    <property type="entry name" value="METHIONINE-R-SULFOXIDE REDUCTASE B3"/>
    <property type="match status" value="1"/>
</dbReference>
<dbReference type="Pfam" id="PF01641">
    <property type="entry name" value="SelR"/>
    <property type="match status" value="1"/>
</dbReference>
<dbReference type="SUPFAM" id="SSF51316">
    <property type="entry name" value="Mss4-like"/>
    <property type="match status" value="1"/>
</dbReference>
<dbReference type="PROSITE" id="PS51790">
    <property type="entry name" value="MSRB"/>
    <property type="match status" value="1"/>
</dbReference>
<feature type="signal peptide" evidence="4">
    <location>
        <begin position="1"/>
        <end position="32"/>
    </location>
</feature>
<feature type="chain" id="PRO_0000327240" description="Methionine-R-sulfoxide reductase B3">
    <location>
        <begin position="33"/>
        <end position="192"/>
    </location>
</feature>
<feature type="domain" description="MsrB" evidence="5">
    <location>
        <begin position="47"/>
        <end position="169"/>
    </location>
</feature>
<feature type="region of interest" description="Disordered" evidence="6">
    <location>
        <begin position="169"/>
        <end position="192"/>
    </location>
</feature>
<feature type="short sequence motif" description="Endoplasmic reticulum retention signal" evidence="1">
    <location>
        <begin position="189"/>
        <end position="192"/>
    </location>
</feature>
<feature type="active site" description="Nucleophile" evidence="5">
    <location>
        <position position="158"/>
    </location>
</feature>
<feature type="binding site" evidence="5">
    <location>
        <position position="86"/>
    </location>
    <ligand>
        <name>Zn(2+)</name>
        <dbReference type="ChEBI" id="CHEBI:29105"/>
    </ligand>
</feature>
<feature type="binding site" evidence="5">
    <location>
        <position position="89"/>
    </location>
    <ligand>
        <name>Zn(2+)</name>
        <dbReference type="ChEBI" id="CHEBI:29105"/>
    </ligand>
</feature>
<feature type="binding site" evidence="5">
    <location>
        <position position="135"/>
    </location>
    <ligand>
        <name>Zn(2+)</name>
        <dbReference type="ChEBI" id="CHEBI:29105"/>
    </ligand>
</feature>
<feature type="binding site" evidence="5">
    <location>
        <position position="138"/>
    </location>
    <ligand>
        <name>Zn(2+)</name>
        <dbReference type="ChEBI" id="CHEBI:29105"/>
    </ligand>
</feature>
<feature type="modified residue" description="N6-acetyllysine" evidence="2">
    <location>
        <position position="42"/>
    </location>
</feature>
<feature type="modified residue" description="Phosphoserine" evidence="2">
    <location>
        <position position="183"/>
    </location>
</feature>
<feature type="splice variant" id="VSP_040883" description="In isoform 2." evidence="11 12 13">
    <original>MSPRRTLPRPLSLCLSLCLCLCLAAALGSAQ</original>
    <variation>MSAFNLLHLVTKSQPVALRACGLP</variation>
    <location>
        <begin position="1"/>
        <end position="31"/>
    </location>
</feature>
<feature type="sequence variant" id="VAR_064904" description="In DFNB74; abolishes zinc-binding and enzymatic activity; dbSNP:rs387907088." evidence="10">
    <original>C</original>
    <variation>G</variation>
    <location>
        <position position="89"/>
    </location>
</feature>
<feature type="mutagenesis site" description="30-fold reduction in activity." evidence="9">
    <original>H</original>
    <variation>G</variation>
    <location>
        <position position="141"/>
    </location>
</feature>
<feature type="mutagenesis site" description="7000-fold reduction in activity." evidence="9">
    <original>N</original>
    <variation>F</variation>
    <location>
        <position position="160"/>
    </location>
</feature>
<feature type="mutagenesis site" description="500-fold reduction in activity." evidence="9">
    <original>N</original>
    <variation>Y</variation>
    <location>
        <position position="160"/>
    </location>
</feature>
<feature type="sequence conflict" description="In Ref. 2; BAH14736." evidence="14" ref="2">
    <original>E</original>
    <variation>G</variation>
    <location>
        <position position="49"/>
    </location>
</feature>
<feature type="turn" evidence="15">
    <location>
        <begin position="35"/>
        <end position="39"/>
    </location>
</feature>
<feature type="helix" evidence="15">
    <location>
        <begin position="47"/>
        <end position="53"/>
    </location>
</feature>
<feature type="helix" evidence="15">
    <location>
        <begin position="56"/>
        <end position="64"/>
    </location>
</feature>
<feature type="turn" evidence="15">
    <location>
        <begin position="74"/>
        <end position="77"/>
    </location>
</feature>
<feature type="strand" evidence="15">
    <location>
        <begin position="81"/>
        <end position="86"/>
    </location>
</feature>
<feature type="turn" evidence="15">
    <location>
        <begin position="87"/>
        <end position="89"/>
    </location>
</feature>
<feature type="strand" evidence="15">
    <location>
        <begin position="92"/>
        <end position="95"/>
    </location>
</feature>
<feature type="helix" evidence="15">
    <location>
        <begin position="96"/>
        <end position="98"/>
    </location>
</feature>
<feature type="strand" evidence="15">
    <location>
        <begin position="108"/>
        <end position="111"/>
    </location>
</feature>
<feature type="strand" evidence="15">
    <location>
        <begin position="117"/>
        <end position="123"/>
    </location>
</feature>
<feature type="helix" evidence="15">
    <location>
        <begin position="125"/>
        <end position="127"/>
    </location>
</feature>
<feature type="strand" evidence="15">
    <location>
        <begin position="130"/>
        <end position="135"/>
    </location>
</feature>
<feature type="turn" evidence="15">
    <location>
        <begin position="136"/>
        <end position="138"/>
    </location>
</feature>
<feature type="strand" evidence="15">
    <location>
        <begin position="141"/>
        <end position="147"/>
    </location>
</feature>
<feature type="turn" evidence="15">
    <location>
        <begin position="151"/>
        <end position="153"/>
    </location>
</feature>
<feature type="strand" evidence="15">
    <location>
        <begin position="156"/>
        <end position="159"/>
    </location>
</feature>
<feature type="helix" evidence="15">
    <location>
        <begin position="161"/>
        <end position="163"/>
    </location>
</feature>
<feature type="strand" evidence="15">
    <location>
        <begin position="164"/>
        <end position="168"/>
    </location>
</feature>
<gene>
    <name type="primary">MSRB3</name>
    <name type="ORF">UNQ1965/PRO4487</name>
</gene>
<evidence type="ECO:0000250" key="1"/>
<evidence type="ECO:0000250" key="2">
    <source>
        <dbReference type="UniProtKB" id="Q8BU85"/>
    </source>
</evidence>
<evidence type="ECO:0000250" key="3">
    <source>
        <dbReference type="UniProtKB" id="Q9JLC3"/>
    </source>
</evidence>
<evidence type="ECO:0000255" key="4"/>
<evidence type="ECO:0000255" key="5">
    <source>
        <dbReference type="PROSITE-ProRule" id="PRU01126"/>
    </source>
</evidence>
<evidence type="ECO:0000256" key="6">
    <source>
        <dbReference type="SAM" id="MobiDB-lite"/>
    </source>
</evidence>
<evidence type="ECO:0000269" key="7">
    <source>
    </source>
</evidence>
<evidence type="ECO:0000269" key="8">
    <source>
    </source>
</evidence>
<evidence type="ECO:0000269" key="9">
    <source>
    </source>
</evidence>
<evidence type="ECO:0000269" key="10">
    <source>
    </source>
</evidence>
<evidence type="ECO:0000303" key="11">
    <source>
    </source>
</evidence>
<evidence type="ECO:0000303" key="12">
    <source>
    </source>
</evidence>
<evidence type="ECO:0000303" key="13">
    <source>
    </source>
</evidence>
<evidence type="ECO:0000305" key="14"/>
<evidence type="ECO:0007829" key="15">
    <source>
        <dbReference type="PDB" id="6QA0"/>
    </source>
</evidence>
<sequence length="192" mass="20702">MSPRRTLPRPLSLCLSLCLCLCLAAALGSAQSGSCRDKKNCKVVFSQQELRKRLTPLQYHVTQEKGTESAFEGEYTHHKDPGIYKCVVCGTPLFKSETKFDSGSGWPSFHDVINSEAITFTDDFSYGMHRVETSCSQCGAHLGHIFDDGPRPTGKRYCINSAALSFTPADSSGTAEGGSGVASPAQADKAEL</sequence>
<keyword id="KW-0002">3D-structure</keyword>
<keyword id="KW-0007">Acetylation</keyword>
<keyword id="KW-0025">Alternative splicing</keyword>
<keyword id="KW-0209">Deafness</keyword>
<keyword id="KW-0225">Disease variant</keyword>
<keyword id="KW-0256">Endoplasmic reticulum</keyword>
<keyword id="KW-0479">Metal-binding</keyword>
<keyword id="KW-0496">Mitochondrion</keyword>
<keyword id="KW-1010">Non-syndromic deafness</keyword>
<keyword id="KW-0560">Oxidoreductase</keyword>
<keyword id="KW-0597">Phosphoprotein</keyword>
<keyword id="KW-1267">Proteomics identification</keyword>
<keyword id="KW-1185">Reference proteome</keyword>
<keyword id="KW-0732">Signal</keyword>
<keyword id="KW-0862">Zinc</keyword>
<comment type="function">
    <text evidence="7 10">Catalyzes the reduction of free and protein-bound methionine sulfoxide to methionine. Isoform 2 is essential for hearing.</text>
</comment>
<comment type="catalytic activity">
    <reaction evidence="3">
        <text>L-methionyl-[protein] + [thioredoxin]-disulfide + H2O = L-methionyl-(R)-S-oxide-[protein] + [thioredoxin]-dithiol</text>
        <dbReference type="Rhea" id="RHEA:24164"/>
        <dbReference type="Rhea" id="RHEA-COMP:10698"/>
        <dbReference type="Rhea" id="RHEA-COMP:10700"/>
        <dbReference type="Rhea" id="RHEA-COMP:12313"/>
        <dbReference type="Rhea" id="RHEA-COMP:12314"/>
        <dbReference type="ChEBI" id="CHEBI:15377"/>
        <dbReference type="ChEBI" id="CHEBI:16044"/>
        <dbReference type="ChEBI" id="CHEBI:29950"/>
        <dbReference type="ChEBI" id="CHEBI:45764"/>
        <dbReference type="ChEBI" id="CHEBI:50058"/>
        <dbReference type="EC" id="1.8.4.12"/>
    </reaction>
</comment>
<comment type="catalytic activity">
    <reaction evidence="3">
        <text>[thioredoxin]-disulfide + L-methionine + H2O = L-methionine (R)-S-oxide + [thioredoxin]-dithiol</text>
        <dbReference type="Rhea" id="RHEA:21260"/>
        <dbReference type="Rhea" id="RHEA-COMP:10698"/>
        <dbReference type="Rhea" id="RHEA-COMP:10700"/>
        <dbReference type="ChEBI" id="CHEBI:15377"/>
        <dbReference type="ChEBI" id="CHEBI:29950"/>
        <dbReference type="ChEBI" id="CHEBI:50058"/>
        <dbReference type="ChEBI" id="CHEBI:57844"/>
        <dbReference type="ChEBI" id="CHEBI:58773"/>
        <dbReference type="EC" id="1.8.4.14"/>
    </reaction>
</comment>
<comment type="cofactor">
    <cofactor evidence="7">
        <name>Zn(2+)</name>
        <dbReference type="ChEBI" id="CHEBI:29105"/>
    </cofactor>
    <text evidence="7">Binds 1 zinc ion per subunit.</text>
</comment>
<comment type="subunit">
    <text evidence="9">Monomer.</text>
</comment>
<comment type="interaction">
    <interactant intactId="EBI-8634060">
        <id>Q8IXL7</id>
    </interactant>
    <interactant intactId="EBI-618309">
        <id>Q08379</id>
        <label>GOLGA2</label>
    </interactant>
    <organismsDiffer>false</organismsDiffer>
    <experiments>3</experiments>
</comment>
<comment type="interaction">
    <interactant intactId="EBI-8634060">
        <id>Q8IXL7</id>
    </interactant>
    <interactant intactId="EBI-2803427">
        <id>Q9UKN5</id>
        <label>PRDM4</label>
    </interactant>
    <organismsDiffer>false</organismsDiffer>
    <experiments>3</experiments>
</comment>
<comment type="interaction">
    <interactant intactId="EBI-8634060">
        <id>Q8IXL7</id>
    </interactant>
    <interactant intactId="EBI-533224">
        <id>P15884</id>
        <label>TCF4</label>
    </interactant>
    <organismsDiffer>false</organismsDiffer>
    <experiments>3</experiments>
</comment>
<comment type="interaction">
    <interactant intactId="EBI-8634060">
        <id>Q8IXL7</id>
    </interactant>
    <interactant intactId="EBI-742327">
        <id>Q15654</id>
        <label>TRIP6</label>
    </interactant>
    <organismsDiffer>false</organismsDiffer>
    <experiments>3</experiments>
</comment>
<comment type="interaction">
    <interactant intactId="EBI-10699187">
        <id>Q8IXL7-2</id>
    </interactant>
    <interactant intactId="EBI-12015080">
        <id>Q8WXK3-2</id>
        <label>ASB13</label>
    </interactant>
    <organismsDiffer>false</organismsDiffer>
    <experiments>3</experiments>
</comment>
<comment type="interaction">
    <interactant intactId="EBI-10699187">
        <id>Q8IXL7-2</id>
    </interactant>
    <interactant intactId="EBI-11524452">
        <id>Q8N9N5-2</id>
        <label>BANP</label>
    </interactant>
    <organismsDiffer>false</organismsDiffer>
    <experiments>3</experiments>
</comment>
<comment type="interaction">
    <interactant intactId="EBI-10699187">
        <id>Q8IXL7-2</id>
    </interactant>
    <interactant intactId="EBI-10171902">
        <id>P56545-3</id>
        <label>CTBP2</label>
    </interactant>
    <organismsDiffer>false</organismsDiffer>
    <experiments>5</experiments>
</comment>
<comment type="interaction">
    <interactant intactId="EBI-10699187">
        <id>Q8IXL7-2</id>
    </interactant>
    <interactant intactId="EBI-12108304">
        <id>Q96AZ1</id>
        <label>EEF1AKMT3</label>
    </interactant>
    <organismsDiffer>false</organismsDiffer>
    <experiments>3</experiments>
</comment>
<comment type="interaction">
    <interactant intactId="EBI-10699187">
        <id>Q8IXL7-2</id>
    </interactant>
    <interactant intactId="EBI-536772">
        <id>Q12805</id>
        <label>EFEMP1</label>
    </interactant>
    <organismsDiffer>false</organismsDiffer>
    <experiments>3</experiments>
</comment>
<comment type="interaction">
    <interactant intactId="EBI-10699187">
        <id>Q8IXL7-2</id>
    </interactant>
    <interactant intactId="EBI-372243">
        <id>P56537</id>
        <label>EIF6</label>
    </interactant>
    <organismsDiffer>false</organismsDiffer>
    <experiments>3</experiments>
</comment>
<comment type="interaction">
    <interactant intactId="EBI-10699187">
        <id>Q8IXL7-2</id>
    </interactant>
    <interactant intactId="EBI-12193763">
        <id>A1KXE4-2</id>
        <label>FAM168B</label>
    </interactant>
    <organismsDiffer>false</organismsDiffer>
    <experiments>3</experiments>
</comment>
<comment type="interaction">
    <interactant intactId="EBI-10699187">
        <id>Q8IXL7-2</id>
    </interactant>
    <interactant intactId="EBI-741101">
        <id>Q13643</id>
        <label>FHL3</label>
    </interactant>
    <organismsDiffer>false</organismsDiffer>
    <experiments>3</experiments>
</comment>
<comment type="interaction">
    <interactant intactId="EBI-10699187">
        <id>Q8IXL7-2</id>
    </interactant>
    <interactant intactId="EBI-618309">
        <id>Q08379</id>
        <label>GOLGA2</label>
    </interactant>
    <organismsDiffer>false</organismsDiffer>
    <experiments>3</experiments>
</comment>
<comment type="interaction">
    <interactant intactId="EBI-10699187">
        <id>Q8IXL7-2</id>
    </interactant>
    <interactant intactId="EBI-15639515">
        <id>O15354</id>
        <label>GPR37</label>
    </interactant>
    <organismsDiffer>false</organismsDiffer>
    <experiments>3</experiments>
</comment>
<comment type="interaction">
    <interactant intactId="EBI-10699187">
        <id>Q8IXL7-2</id>
    </interactant>
    <interactant intactId="EBI-747754">
        <id>P28799</id>
        <label>GRN</label>
    </interactant>
    <organismsDiffer>false</organismsDiffer>
    <experiments>3</experiments>
</comment>
<comment type="interaction">
    <interactant intactId="EBI-10699187">
        <id>Q8IXL7-2</id>
    </interactant>
    <interactant intactId="EBI-25860013">
        <id>P28799-2</id>
        <label>GRN</label>
    </interactant>
    <organismsDiffer>false</organismsDiffer>
    <experiments>3</experiments>
</comment>
<comment type="interaction">
    <interactant intactId="EBI-10699187">
        <id>Q8IXL7-2</id>
    </interactant>
    <interactant intactId="EBI-10975473">
        <id>O60333-2</id>
        <label>KIF1B</label>
    </interactant>
    <organismsDiffer>false</organismsDiffer>
    <experiments>3</experiments>
</comment>
<comment type="interaction">
    <interactant intactId="EBI-10699187">
        <id>Q8IXL7-2</id>
    </interactant>
    <interactant intactId="EBI-948001">
        <id>Q15323</id>
        <label>KRT31</label>
    </interactant>
    <organismsDiffer>false</organismsDiffer>
    <experiments>3</experiments>
</comment>
<comment type="interaction">
    <interactant intactId="EBI-10699187">
        <id>Q8IXL7-2</id>
    </interactant>
    <interactant intactId="EBI-1047093">
        <id>O76011</id>
        <label>KRT34</label>
    </interactant>
    <organismsDiffer>false</organismsDiffer>
    <experiments>3</experiments>
</comment>
<comment type="interaction">
    <interactant intactId="EBI-10699187">
        <id>Q8IXL7-2</id>
    </interactant>
    <interactant intactId="EBI-10171697">
        <id>Q6A162</id>
        <label>KRT40</label>
    </interactant>
    <organismsDiffer>false</organismsDiffer>
    <experiments>3</experiments>
</comment>
<comment type="interaction">
    <interactant intactId="EBI-10699187">
        <id>Q8IXL7-2</id>
    </interactant>
    <interactant intactId="EBI-11911016">
        <id>P80188</id>
        <label>LCN2</label>
    </interactant>
    <organismsDiffer>false</organismsDiffer>
    <experiments>3</experiments>
</comment>
<comment type="interaction">
    <interactant intactId="EBI-10699187">
        <id>Q8IXL7-2</id>
    </interactant>
    <interactant intactId="EBI-3957138">
        <id>Q86YW9</id>
        <label>MED12L</label>
    </interactant>
    <organismsDiffer>false</organismsDiffer>
    <experiments>3</experiments>
</comment>
<comment type="interaction">
    <interactant intactId="EBI-10699187">
        <id>Q8IXL7-2</id>
    </interactant>
    <interactant intactId="EBI-10174029">
        <id>A6NJ78-4</id>
        <label>METTL15</label>
    </interactant>
    <organismsDiffer>false</organismsDiffer>
    <experiments>3</experiments>
</comment>
<comment type="interaction">
    <interactant intactId="EBI-10699187">
        <id>Q8IXL7-2</id>
    </interactant>
    <interactant intactId="EBI-8652459">
        <id>Q8WXB1</id>
        <label>METTL21A</label>
    </interactant>
    <organismsDiffer>false</organismsDiffer>
    <experiments>3</experiments>
</comment>
<comment type="interaction">
    <interactant intactId="EBI-10699187">
        <id>Q8IXL7-2</id>
    </interactant>
    <interactant intactId="EBI-12866138">
        <id>A0A0C4DFN3</id>
        <label>MGLL</label>
    </interactant>
    <organismsDiffer>false</organismsDiffer>
    <experiments>3</experiments>
</comment>
<comment type="interaction">
    <interactant intactId="EBI-10699187">
        <id>Q8IXL7-2</id>
    </interactant>
    <interactant intactId="EBI-475646">
        <id>P07196</id>
        <label>NEFL</label>
    </interactant>
    <organismsDiffer>false</organismsDiffer>
    <experiments>3</experiments>
</comment>
<comment type="interaction">
    <interactant intactId="EBI-10699187">
        <id>Q8IXL7-2</id>
    </interactant>
    <interactant intactId="EBI-79165">
        <id>Q9NRD5</id>
        <label>PICK1</label>
    </interactant>
    <organismsDiffer>false</organismsDiffer>
    <experiments>3</experiments>
</comment>
<comment type="interaction">
    <interactant intactId="EBI-10699187">
        <id>Q8IXL7-2</id>
    </interactant>
    <interactant intactId="EBI-949255">
        <id>Q58EX7</id>
        <label>PLEKHG4</label>
    </interactant>
    <organismsDiffer>false</organismsDiffer>
    <experiments>3</experiments>
</comment>
<comment type="interaction">
    <interactant intactId="EBI-10699187">
        <id>Q8IXL7-2</id>
    </interactant>
    <interactant intactId="EBI-12029004">
        <id>P78424</id>
        <label>POU6F2</label>
    </interactant>
    <organismsDiffer>false</organismsDiffer>
    <experiments>3</experiments>
</comment>
<comment type="interaction">
    <interactant intactId="EBI-10699187">
        <id>Q8IXL7-2</id>
    </interactant>
    <interactant intactId="EBI-10829018">
        <id>Q04864-2</id>
        <label>REL</label>
    </interactant>
    <organismsDiffer>false</organismsDiffer>
    <experiments>3</experiments>
</comment>
<comment type="interaction">
    <interactant intactId="EBI-10699187">
        <id>Q8IXL7-2</id>
    </interactant>
    <interactant intactId="EBI-396669">
        <id>Q9Y3C5</id>
        <label>RNF11</label>
    </interactant>
    <organismsDiffer>false</organismsDiffer>
    <experiments>3</experiments>
</comment>
<comment type="interaction">
    <interactant intactId="EBI-10699187">
        <id>Q8IXL7-2</id>
    </interactant>
    <interactant intactId="EBI-358545">
        <id>Q9GZS3</id>
        <label>SKIC8</label>
    </interactant>
    <organismsDiffer>false</organismsDiffer>
    <experiments>3</experiments>
</comment>
<comment type="interaction">
    <interactant intactId="EBI-10699187">
        <id>Q8IXL7-2</id>
    </interactant>
    <interactant intactId="EBI-5235340">
        <id>Q7Z699</id>
        <label>SPRED1</label>
    </interactant>
    <organismsDiffer>false</organismsDiffer>
    <experiments>3</experiments>
</comment>
<comment type="interaction">
    <interactant intactId="EBI-10699187">
        <id>Q8IXL7-2</id>
    </interactant>
    <interactant intactId="EBI-740098">
        <id>P36406</id>
        <label>TRIM23</label>
    </interactant>
    <organismsDiffer>false</organismsDiffer>
    <experiments>3</experiments>
</comment>
<comment type="interaction">
    <interactant intactId="EBI-10699187">
        <id>Q8IXL7-2</id>
    </interactant>
    <interactant intactId="EBI-12068150">
        <id>Q6NVU6</id>
        <label>UFSP1</label>
    </interactant>
    <organismsDiffer>false</organismsDiffer>
    <experiments>3</experiments>
</comment>
<comment type="interaction">
    <interactant intactId="EBI-10699187">
        <id>Q8IXL7-2</id>
    </interactant>
    <interactant intactId="EBI-720609">
        <id>O76024</id>
        <label>WFS1</label>
    </interactant>
    <organismsDiffer>false</organismsDiffer>
    <experiments>3</experiments>
</comment>
<comment type="interaction">
    <interactant intactId="EBI-10699187">
        <id>Q8IXL7-2</id>
    </interactant>
    <interactant intactId="EBI-12030590">
        <id>Q9H0C1</id>
        <label>ZMYND12</label>
    </interactant>
    <organismsDiffer>false</organismsDiffer>
    <experiments>3</experiments>
</comment>
<comment type="subcellular location">
    <molecule>Isoform 1</molecule>
    <subcellularLocation>
        <location>Endoplasmic reticulum</location>
    </subcellularLocation>
</comment>
<comment type="subcellular location">
    <molecule>Isoform 2</molecule>
    <subcellularLocation>
        <location>Mitochondrion</location>
    </subcellularLocation>
</comment>
<comment type="alternative products">
    <event type="alternative splicing"/>
    <isoform>
        <id>Q8IXL7-1</id>
        <name>1</name>
        <name>A</name>
        <sequence type="displayed"/>
    </isoform>
    <isoform>
        <id>Q8IXL7-2</id>
        <name>2</name>
        <name>B</name>
        <name>C</name>
        <name>D</name>
        <sequence type="described" ref="VSP_040883"/>
    </isoform>
</comment>
<comment type="tissue specificity">
    <text evidence="8 10">Widely expressed.</text>
</comment>
<comment type="disease" evidence="10">
    <disease id="DI-02958">
        <name>Deafness, autosomal recessive, 74</name>
        <acronym>DFNB74</acronym>
        <description>A form of non-syndromic sensorineural deafness characterized by prelingual, bilateral, profound hearing loss. Sensorineural deafness results from damage to the neural receptors of the inner ear, the nerve pathways to the brain, or the area of the brain that receives sound information.</description>
        <dbReference type="MIM" id="613718"/>
    </disease>
    <text>The disease is caused by variants affecting the gene represented in this entry. A nonsense mutation affecting exclusively mitochondrial isoform 2 is sufficient to produce hearing loss.</text>
</comment>
<comment type="miscellaneous">
    <molecule>Isoform 2</molecule>
    <text evidence="14">Has a transit peptide.</text>
</comment>
<comment type="similarity">
    <text evidence="14">Belongs to the MsrB Met sulfoxide reductase family.</text>
</comment>
<proteinExistence type="evidence at protein level"/>
<protein>
    <recommendedName>
        <fullName>Methionine-R-sulfoxide reductase B3</fullName>
        <shortName>MsrB3</shortName>
        <ecNumber evidence="3">1.8.4.12</ecNumber>
        <ecNumber evidence="3">1.8.4.14</ecNumber>
    </recommendedName>
</protein>
<reference key="1">
    <citation type="journal article" date="2003" name="Genome Res.">
        <title>The secreted protein discovery initiative (SPDI), a large-scale effort to identify novel human secreted and transmembrane proteins: a bioinformatics assessment.</title>
        <authorList>
            <person name="Clark H.F."/>
            <person name="Gurney A.L."/>
            <person name="Abaya E."/>
            <person name="Baker K."/>
            <person name="Baldwin D.T."/>
            <person name="Brush J."/>
            <person name="Chen J."/>
            <person name="Chow B."/>
            <person name="Chui C."/>
            <person name="Crowley C."/>
            <person name="Currell B."/>
            <person name="Deuel B."/>
            <person name="Dowd P."/>
            <person name="Eaton D."/>
            <person name="Foster J.S."/>
            <person name="Grimaldi C."/>
            <person name="Gu Q."/>
            <person name="Hass P.E."/>
            <person name="Heldens S."/>
            <person name="Huang A."/>
            <person name="Kim H.S."/>
            <person name="Klimowski L."/>
            <person name="Jin Y."/>
            <person name="Johnson S."/>
            <person name="Lee J."/>
            <person name="Lewis L."/>
            <person name="Liao D."/>
            <person name="Mark M.R."/>
            <person name="Robbie E."/>
            <person name="Sanchez C."/>
            <person name="Schoenfeld J."/>
            <person name="Seshagiri S."/>
            <person name="Simmons L."/>
            <person name="Singh J."/>
            <person name="Smith V."/>
            <person name="Stinson J."/>
            <person name="Vagts A."/>
            <person name="Vandlen R.L."/>
            <person name="Watanabe C."/>
            <person name="Wieand D."/>
            <person name="Woods K."/>
            <person name="Xie M.-H."/>
            <person name="Yansura D.G."/>
            <person name="Yi S."/>
            <person name="Yu G."/>
            <person name="Yuan J."/>
            <person name="Zhang M."/>
            <person name="Zhang Z."/>
            <person name="Goddard A.D."/>
            <person name="Wood W.I."/>
            <person name="Godowski P.J."/>
            <person name="Gray A.M."/>
        </authorList>
    </citation>
    <scope>NUCLEOTIDE SEQUENCE [LARGE SCALE MRNA] (ISOFORM 1)</scope>
</reference>
<reference key="2">
    <citation type="journal article" date="2004" name="Nat. Genet.">
        <title>Complete sequencing and characterization of 21,243 full-length human cDNAs.</title>
        <authorList>
            <person name="Ota T."/>
            <person name="Suzuki Y."/>
            <person name="Nishikawa T."/>
            <person name="Otsuki T."/>
            <person name="Sugiyama T."/>
            <person name="Irie R."/>
            <person name="Wakamatsu A."/>
            <person name="Hayashi K."/>
            <person name="Sato H."/>
            <person name="Nagai K."/>
            <person name="Kimura K."/>
            <person name="Makita H."/>
            <person name="Sekine M."/>
            <person name="Obayashi M."/>
            <person name="Nishi T."/>
            <person name="Shibahara T."/>
            <person name="Tanaka T."/>
            <person name="Ishii S."/>
            <person name="Yamamoto J."/>
            <person name="Saito K."/>
            <person name="Kawai Y."/>
            <person name="Isono Y."/>
            <person name="Nakamura Y."/>
            <person name="Nagahari K."/>
            <person name="Murakami K."/>
            <person name="Yasuda T."/>
            <person name="Iwayanagi T."/>
            <person name="Wagatsuma M."/>
            <person name="Shiratori A."/>
            <person name="Sudo H."/>
            <person name="Hosoiri T."/>
            <person name="Kaku Y."/>
            <person name="Kodaira H."/>
            <person name="Kondo H."/>
            <person name="Sugawara M."/>
            <person name="Takahashi M."/>
            <person name="Kanda K."/>
            <person name="Yokoi T."/>
            <person name="Furuya T."/>
            <person name="Kikkawa E."/>
            <person name="Omura Y."/>
            <person name="Abe K."/>
            <person name="Kamihara K."/>
            <person name="Katsuta N."/>
            <person name="Sato K."/>
            <person name="Tanikawa M."/>
            <person name="Yamazaki M."/>
            <person name="Ninomiya K."/>
            <person name="Ishibashi T."/>
            <person name="Yamashita H."/>
            <person name="Murakawa K."/>
            <person name="Fujimori K."/>
            <person name="Tanai H."/>
            <person name="Kimata M."/>
            <person name="Watanabe M."/>
            <person name="Hiraoka S."/>
            <person name="Chiba Y."/>
            <person name="Ishida S."/>
            <person name="Ono Y."/>
            <person name="Takiguchi S."/>
            <person name="Watanabe S."/>
            <person name="Yosida M."/>
            <person name="Hotuta T."/>
            <person name="Kusano J."/>
            <person name="Kanehori K."/>
            <person name="Takahashi-Fujii A."/>
            <person name="Hara H."/>
            <person name="Tanase T.-O."/>
            <person name="Nomura Y."/>
            <person name="Togiya S."/>
            <person name="Komai F."/>
            <person name="Hara R."/>
            <person name="Takeuchi K."/>
            <person name="Arita M."/>
            <person name="Imose N."/>
            <person name="Musashino K."/>
            <person name="Yuuki H."/>
            <person name="Oshima A."/>
            <person name="Sasaki N."/>
            <person name="Aotsuka S."/>
            <person name="Yoshikawa Y."/>
            <person name="Matsunawa H."/>
            <person name="Ichihara T."/>
            <person name="Shiohata N."/>
            <person name="Sano S."/>
            <person name="Moriya S."/>
            <person name="Momiyama H."/>
            <person name="Satoh N."/>
            <person name="Takami S."/>
            <person name="Terashima Y."/>
            <person name="Suzuki O."/>
            <person name="Nakagawa S."/>
            <person name="Senoh A."/>
            <person name="Mizoguchi H."/>
            <person name="Goto Y."/>
            <person name="Shimizu F."/>
            <person name="Wakebe H."/>
            <person name="Hishigaki H."/>
            <person name="Watanabe T."/>
            <person name="Sugiyama A."/>
            <person name="Takemoto M."/>
            <person name="Kawakami B."/>
            <person name="Yamazaki M."/>
            <person name="Watanabe K."/>
            <person name="Kumagai A."/>
            <person name="Itakura S."/>
            <person name="Fukuzumi Y."/>
            <person name="Fujimori Y."/>
            <person name="Komiyama M."/>
            <person name="Tashiro H."/>
            <person name="Tanigami A."/>
            <person name="Fujiwara T."/>
            <person name="Ono T."/>
            <person name="Yamada K."/>
            <person name="Fujii Y."/>
            <person name="Ozaki K."/>
            <person name="Hirao M."/>
            <person name="Ohmori Y."/>
            <person name="Kawabata A."/>
            <person name="Hikiji T."/>
            <person name="Kobatake N."/>
            <person name="Inagaki H."/>
            <person name="Ikema Y."/>
            <person name="Okamoto S."/>
            <person name="Okitani R."/>
            <person name="Kawakami T."/>
            <person name="Noguchi S."/>
            <person name="Itoh T."/>
            <person name="Shigeta K."/>
            <person name="Senba T."/>
            <person name="Matsumura K."/>
            <person name="Nakajima Y."/>
            <person name="Mizuno T."/>
            <person name="Morinaga M."/>
            <person name="Sasaki M."/>
            <person name="Togashi T."/>
            <person name="Oyama M."/>
            <person name="Hata H."/>
            <person name="Watanabe M."/>
            <person name="Komatsu T."/>
            <person name="Mizushima-Sugano J."/>
            <person name="Satoh T."/>
            <person name="Shirai Y."/>
            <person name="Takahashi Y."/>
            <person name="Nakagawa K."/>
            <person name="Okumura K."/>
            <person name="Nagase T."/>
            <person name="Nomura N."/>
            <person name="Kikuchi H."/>
            <person name="Masuho Y."/>
            <person name="Yamashita R."/>
            <person name="Nakai K."/>
            <person name="Yada T."/>
            <person name="Nakamura Y."/>
            <person name="Ohara O."/>
            <person name="Isogai T."/>
            <person name="Sugano S."/>
        </authorList>
    </citation>
    <scope>NUCLEOTIDE SEQUENCE [LARGE SCALE MRNA] (ISOFORMS 1 AND 2)</scope>
    <source>
        <tissue>Esophageal carcinoma</tissue>
        <tissue>Teratocarcinoma</tissue>
        <tissue>Uterus</tissue>
    </source>
</reference>
<reference key="3">
    <citation type="journal article" date="2007" name="BMC Genomics">
        <title>The full-ORF clone resource of the German cDNA consortium.</title>
        <authorList>
            <person name="Bechtel S."/>
            <person name="Rosenfelder H."/>
            <person name="Duda A."/>
            <person name="Schmidt C.P."/>
            <person name="Ernst U."/>
            <person name="Wellenreuther R."/>
            <person name="Mehrle A."/>
            <person name="Schuster C."/>
            <person name="Bahr A."/>
            <person name="Bloecker H."/>
            <person name="Heubner D."/>
            <person name="Hoerlein A."/>
            <person name="Michel G."/>
            <person name="Wedler H."/>
            <person name="Koehrer K."/>
            <person name="Ottenwaelder B."/>
            <person name="Poustka A."/>
            <person name="Wiemann S."/>
            <person name="Schupp I."/>
        </authorList>
    </citation>
    <scope>NUCLEOTIDE SEQUENCE [LARGE SCALE MRNA] (ISOFORM 2)</scope>
    <source>
        <tissue>Uterus</tissue>
    </source>
</reference>
<reference key="4">
    <citation type="journal article" date="2004" name="Genome Res.">
        <title>The status, quality, and expansion of the NIH full-length cDNA project: the Mammalian Gene Collection (MGC).</title>
        <authorList>
            <consortium name="The MGC Project Team"/>
        </authorList>
    </citation>
    <scope>NUCLEOTIDE SEQUENCE [LARGE SCALE MRNA] (ISOFORM 2)</scope>
    <source>
        <tissue>Pancreas</tissue>
    </source>
</reference>
<reference key="5">
    <citation type="journal article" date="2004" name="Mol. Biol. Cell">
        <title>Methionine sulfoxide reduction in mammals: characterization of methionine-R-sulfoxide reductases.</title>
        <authorList>
            <person name="Kim H.-Y."/>
            <person name="Gladyshev V.N."/>
        </authorList>
    </citation>
    <scope>FUNCTION</scope>
    <scope>COFACTOR</scope>
    <scope>SUBCELLULAR LOCATION</scope>
    <scope>ALTERNATIVE SPLICING</scope>
</reference>
<reference key="6">
    <citation type="journal article" date="2005" name="Invest. Ophthalmol. Vis. Sci.">
        <title>Methionine sulfoxide reductases B1, B2, and B3 are present in the human lens and confer oxidative stress resistance to lens cells.</title>
        <authorList>
            <person name="Marchetti M.A."/>
            <person name="Pizarro G.O."/>
            <person name="Sagher D."/>
            <person name="Deamicis C."/>
            <person name="Brot N."/>
            <person name="Hejtmancik J.F."/>
            <person name="Weissbach H."/>
            <person name="Kantorow M."/>
        </authorList>
    </citation>
    <scope>TISSUE SPECIFICITY</scope>
</reference>
<reference key="7">
    <citation type="journal article" date="2005" name="PLoS Biol.">
        <title>Different catalytic mechanisms in mammalian selenocysteine- and cysteine-containing methionine-R-sulfoxide reductases.</title>
        <authorList>
            <person name="Kim H.-Y."/>
            <person name="Gladyshev V.N."/>
        </authorList>
    </citation>
    <scope>MUTAGENESIS OF HIS-141 AND ASN-160</scope>
    <scope>SUBUNIT</scope>
</reference>
<reference key="8">
    <citation type="journal article" date="2011" name="Am. J. Hum. Genet.">
        <title>Functional null mutations of MSRB3 encoding methionine sulfoxide reductase are associated with human deafness DFNB74.</title>
        <authorList>
            <person name="Ahmed Z.M."/>
            <person name="Yousaf R."/>
            <person name="Lee B.C."/>
            <person name="Khan S.N."/>
            <person name="Lee S."/>
            <person name="Lee K."/>
            <person name="Husnain T."/>
            <person name="Rehman A.U."/>
            <person name="Bonneux S."/>
            <person name="Ansar M."/>
            <person name="Ahmad W."/>
            <person name="Leal S.M."/>
            <person name="Gladyshev V.N."/>
            <person name="Belyantseva I.A."/>
            <person name="Van Camp G."/>
            <person name="Riazuddin S."/>
            <person name="Friedman T.B."/>
            <person name="Riazuddin S."/>
        </authorList>
    </citation>
    <scope>VARIANT DFNB74 GLY-89</scope>
    <scope>FUNCTION</scope>
    <scope>ALTERNATIVE SPLICING</scope>
    <scope>TISSUE SPECIFICITY</scope>
</reference>